<keyword id="KW-0030">Aminoacyl-tRNA synthetase</keyword>
<keyword id="KW-0067">ATP-binding</keyword>
<keyword id="KW-0963">Cytoplasm</keyword>
<keyword id="KW-0436">Ligase</keyword>
<keyword id="KW-0547">Nucleotide-binding</keyword>
<keyword id="KW-0648">Protein biosynthesis</keyword>
<keyword id="KW-1185">Reference proteome</keyword>
<accession>B0KCH5</accession>
<feature type="chain" id="PRO_1000199433" description="Proline--tRNA ligase">
    <location>
        <begin position="1"/>
        <end position="570"/>
    </location>
</feature>
<organism>
    <name type="scientific">Thermoanaerobacter pseudethanolicus (strain ATCC 33223 / 39E)</name>
    <name type="common">Clostridium thermohydrosulfuricum</name>
    <dbReference type="NCBI Taxonomy" id="340099"/>
    <lineage>
        <taxon>Bacteria</taxon>
        <taxon>Bacillati</taxon>
        <taxon>Bacillota</taxon>
        <taxon>Clostridia</taxon>
        <taxon>Thermoanaerobacterales</taxon>
        <taxon>Thermoanaerobacteraceae</taxon>
        <taxon>Thermoanaerobacter</taxon>
    </lineage>
</organism>
<name>SYP_THEP3</name>
<protein>
    <recommendedName>
        <fullName evidence="1">Proline--tRNA ligase</fullName>
        <ecNumber evidence="1">6.1.1.15</ecNumber>
    </recommendedName>
    <alternativeName>
        <fullName evidence="1">Prolyl-tRNA synthetase</fullName>
        <shortName evidence="1">ProRS</shortName>
    </alternativeName>
</protein>
<dbReference type="EC" id="6.1.1.15" evidence="1"/>
<dbReference type="EMBL" id="CP000924">
    <property type="protein sequence ID" value="ABY94018.1"/>
    <property type="molecule type" value="Genomic_DNA"/>
</dbReference>
<dbReference type="RefSeq" id="WP_012268986.1">
    <property type="nucleotide sequence ID" value="NC_010321.1"/>
</dbReference>
<dbReference type="SMR" id="B0KCH5"/>
<dbReference type="STRING" id="340099.Teth39_0349"/>
<dbReference type="KEGG" id="tpd:Teth39_0349"/>
<dbReference type="eggNOG" id="COG0442">
    <property type="taxonomic scope" value="Bacteria"/>
</dbReference>
<dbReference type="HOGENOM" id="CLU_016739_0_0_9"/>
<dbReference type="Proteomes" id="UP000002156">
    <property type="component" value="Chromosome"/>
</dbReference>
<dbReference type="GO" id="GO:0005829">
    <property type="term" value="C:cytosol"/>
    <property type="evidence" value="ECO:0007669"/>
    <property type="project" value="TreeGrafter"/>
</dbReference>
<dbReference type="GO" id="GO:0002161">
    <property type="term" value="F:aminoacyl-tRNA deacylase activity"/>
    <property type="evidence" value="ECO:0007669"/>
    <property type="project" value="InterPro"/>
</dbReference>
<dbReference type="GO" id="GO:0005524">
    <property type="term" value="F:ATP binding"/>
    <property type="evidence" value="ECO:0007669"/>
    <property type="project" value="UniProtKB-UniRule"/>
</dbReference>
<dbReference type="GO" id="GO:0140096">
    <property type="term" value="F:catalytic activity, acting on a protein"/>
    <property type="evidence" value="ECO:0007669"/>
    <property type="project" value="UniProtKB-ARBA"/>
</dbReference>
<dbReference type="GO" id="GO:0004827">
    <property type="term" value="F:proline-tRNA ligase activity"/>
    <property type="evidence" value="ECO:0007669"/>
    <property type="project" value="UniProtKB-UniRule"/>
</dbReference>
<dbReference type="GO" id="GO:0016740">
    <property type="term" value="F:transferase activity"/>
    <property type="evidence" value="ECO:0007669"/>
    <property type="project" value="UniProtKB-ARBA"/>
</dbReference>
<dbReference type="GO" id="GO:0006433">
    <property type="term" value="P:prolyl-tRNA aminoacylation"/>
    <property type="evidence" value="ECO:0007669"/>
    <property type="project" value="UniProtKB-UniRule"/>
</dbReference>
<dbReference type="CDD" id="cd04334">
    <property type="entry name" value="ProRS-INS"/>
    <property type="match status" value="1"/>
</dbReference>
<dbReference type="CDD" id="cd00861">
    <property type="entry name" value="ProRS_anticodon_short"/>
    <property type="match status" value="1"/>
</dbReference>
<dbReference type="CDD" id="cd00779">
    <property type="entry name" value="ProRS_core_prok"/>
    <property type="match status" value="1"/>
</dbReference>
<dbReference type="FunFam" id="3.30.930.10:FF:000065">
    <property type="entry name" value="Proline--tRNA ligase"/>
    <property type="match status" value="1"/>
</dbReference>
<dbReference type="FunFam" id="3.30.930.10:FF:000066">
    <property type="entry name" value="Proline--tRNA ligase"/>
    <property type="match status" value="1"/>
</dbReference>
<dbReference type="FunFam" id="3.40.50.800:FF:000011">
    <property type="entry name" value="Proline--tRNA ligase"/>
    <property type="match status" value="1"/>
</dbReference>
<dbReference type="Gene3D" id="3.40.50.800">
    <property type="entry name" value="Anticodon-binding domain"/>
    <property type="match status" value="1"/>
</dbReference>
<dbReference type="Gene3D" id="3.30.930.10">
    <property type="entry name" value="Bira Bifunctional Protein, Domain 2"/>
    <property type="match status" value="2"/>
</dbReference>
<dbReference type="HAMAP" id="MF_01569">
    <property type="entry name" value="Pro_tRNA_synth_type1"/>
    <property type="match status" value="1"/>
</dbReference>
<dbReference type="InterPro" id="IPR002314">
    <property type="entry name" value="aa-tRNA-synt_IIb"/>
</dbReference>
<dbReference type="InterPro" id="IPR006195">
    <property type="entry name" value="aa-tRNA-synth_II"/>
</dbReference>
<dbReference type="InterPro" id="IPR045864">
    <property type="entry name" value="aa-tRNA-synth_II/BPL/LPL"/>
</dbReference>
<dbReference type="InterPro" id="IPR004154">
    <property type="entry name" value="Anticodon-bd"/>
</dbReference>
<dbReference type="InterPro" id="IPR036621">
    <property type="entry name" value="Anticodon-bd_dom_sf"/>
</dbReference>
<dbReference type="InterPro" id="IPR002316">
    <property type="entry name" value="Pro-tRNA-ligase_IIa"/>
</dbReference>
<dbReference type="InterPro" id="IPR004500">
    <property type="entry name" value="Pro-tRNA-synth_IIa_bac-type"/>
</dbReference>
<dbReference type="InterPro" id="IPR023717">
    <property type="entry name" value="Pro-tRNA-Synthase_IIa_type1"/>
</dbReference>
<dbReference type="InterPro" id="IPR050062">
    <property type="entry name" value="Pro-tRNA_synthetase"/>
</dbReference>
<dbReference type="InterPro" id="IPR044140">
    <property type="entry name" value="ProRS_anticodon_short"/>
</dbReference>
<dbReference type="InterPro" id="IPR033730">
    <property type="entry name" value="ProRS_core_prok"/>
</dbReference>
<dbReference type="InterPro" id="IPR036754">
    <property type="entry name" value="YbaK/aa-tRNA-synt-asso_dom_sf"/>
</dbReference>
<dbReference type="InterPro" id="IPR007214">
    <property type="entry name" value="YbaK/aa-tRNA-synth-assoc-dom"/>
</dbReference>
<dbReference type="NCBIfam" id="NF006625">
    <property type="entry name" value="PRK09194.1"/>
    <property type="match status" value="1"/>
</dbReference>
<dbReference type="NCBIfam" id="TIGR00409">
    <property type="entry name" value="proS_fam_II"/>
    <property type="match status" value="1"/>
</dbReference>
<dbReference type="PANTHER" id="PTHR42753">
    <property type="entry name" value="MITOCHONDRIAL RIBOSOME PROTEIN L39/PROLYL-TRNA LIGASE FAMILY MEMBER"/>
    <property type="match status" value="1"/>
</dbReference>
<dbReference type="PANTHER" id="PTHR42753:SF2">
    <property type="entry name" value="PROLINE--TRNA LIGASE"/>
    <property type="match status" value="1"/>
</dbReference>
<dbReference type="Pfam" id="PF03129">
    <property type="entry name" value="HGTP_anticodon"/>
    <property type="match status" value="1"/>
</dbReference>
<dbReference type="Pfam" id="PF00587">
    <property type="entry name" value="tRNA-synt_2b"/>
    <property type="match status" value="1"/>
</dbReference>
<dbReference type="Pfam" id="PF04073">
    <property type="entry name" value="tRNA_edit"/>
    <property type="match status" value="1"/>
</dbReference>
<dbReference type="PIRSF" id="PIRSF001535">
    <property type="entry name" value="ProRS_1"/>
    <property type="match status" value="1"/>
</dbReference>
<dbReference type="PRINTS" id="PR01046">
    <property type="entry name" value="TRNASYNTHPRO"/>
</dbReference>
<dbReference type="SUPFAM" id="SSF52954">
    <property type="entry name" value="Class II aaRS ABD-related"/>
    <property type="match status" value="1"/>
</dbReference>
<dbReference type="SUPFAM" id="SSF55681">
    <property type="entry name" value="Class II aaRS and biotin synthetases"/>
    <property type="match status" value="1"/>
</dbReference>
<dbReference type="SUPFAM" id="SSF55826">
    <property type="entry name" value="YbaK/ProRS associated domain"/>
    <property type="match status" value="1"/>
</dbReference>
<dbReference type="PROSITE" id="PS50862">
    <property type="entry name" value="AA_TRNA_LIGASE_II"/>
    <property type="match status" value="1"/>
</dbReference>
<gene>
    <name evidence="1" type="primary">proS</name>
    <name type="ordered locus">Teth39_0349</name>
</gene>
<evidence type="ECO:0000255" key="1">
    <source>
        <dbReference type="HAMAP-Rule" id="MF_01569"/>
    </source>
</evidence>
<sequence>MRLSQLLVPTLREIPAEAEIPSHILMLKAALMRKLASGVYIYLPLGQRVLRKVEQIVREEMDRAGSQEVLMSALIPAELLKESGRWDVFGPEMFKLKDRNERDFCLGPTHEEVFTDLIRNEVKSYRQLPLILYQIQTKFRDERRPRFGVMRSREFIMKDAYSFDMDWEGLDKSFNKMYEAYCRIFDRCGLKYLVVEADSGAMGGKDSKEFMVISGVGEAVIAYCDNCGYAANEEKAECLINQEIVEEMLPKEEVYTPNVRTIEELVNFLGITPNKFVKTLIYKAKDNVVAALVRGDRDLNETKLLNILGIREEELELADASIVEKVTGAKVGFAGPIGLKGEVMIIVDNEIPQMRNFIVGANETDYHIKNVNYGRDFKADVVADIKNVIEGDKCPRCGSPLKIDRGIEVGHIFKLGTKYSDALGAKYVDEEGNEKPIIMGCYGIGINRTVAAIIEQHHDEKGIIWPMSVAPYHVIIVPVNVSNEAQNRVAEDIYAALQKEGIEVLIDDRDLRAGVKFNDADLLGIPIRITVGKKVDDGIVEIKLRENEEAEEVKISDVVEKVKNIIKEKM</sequence>
<proteinExistence type="inferred from homology"/>
<comment type="function">
    <text evidence="1">Catalyzes the attachment of proline to tRNA(Pro) in a two-step reaction: proline is first activated by ATP to form Pro-AMP and then transferred to the acceptor end of tRNA(Pro). As ProRS can inadvertently accommodate and process non-cognate amino acids such as alanine and cysteine, to avoid such errors it has two additional distinct editing activities against alanine. One activity is designated as 'pretransfer' editing and involves the tRNA(Pro)-independent hydrolysis of activated Ala-AMP. The other activity is designated 'posttransfer' editing and involves deacylation of mischarged Ala-tRNA(Pro). The misacylated Cys-tRNA(Pro) is not edited by ProRS.</text>
</comment>
<comment type="catalytic activity">
    <reaction evidence="1">
        <text>tRNA(Pro) + L-proline + ATP = L-prolyl-tRNA(Pro) + AMP + diphosphate</text>
        <dbReference type="Rhea" id="RHEA:14305"/>
        <dbReference type="Rhea" id="RHEA-COMP:9700"/>
        <dbReference type="Rhea" id="RHEA-COMP:9702"/>
        <dbReference type="ChEBI" id="CHEBI:30616"/>
        <dbReference type="ChEBI" id="CHEBI:33019"/>
        <dbReference type="ChEBI" id="CHEBI:60039"/>
        <dbReference type="ChEBI" id="CHEBI:78442"/>
        <dbReference type="ChEBI" id="CHEBI:78532"/>
        <dbReference type="ChEBI" id="CHEBI:456215"/>
        <dbReference type="EC" id="6.1.1.15"/>
    </reaction>
</comment>
<comment type="subunit">
    <text evidence="1">Homodimer.</text>
</comment>
<comment type="subcellular location">
    <subcellularLocation>
        <location evidence="1">Cytoplasm</location>
    </subcellularLocation>
</comment>
<comment type="domain">
    <text evidence="1">Consists of three domains: the N-terminal catalytic domain, the editing domain and the C-terminal anticodon-binding domain.</text>
</comment>
<comment type="similarity">
    <text evidence="1">Belongs to the class-II aminoacyl-tRNA synthetase family. ProS type 1 subfamily.</text>
</comment>
<reference key="1">
    <citation type="submission" date="2008-01" db="EMBL/GenBank/DDBJ databases">
        <title>Complete sequence of Thermoanaerobacter pseudethanolicus 39E.</title>
        <authorList>
            <person name="Copeland A."/>
            <person name="Lucas S."/>
            <person name="Lapidus A."/>
            <person name="Barry K."/>
            <person name="Glavina del Rio T."/>
            <person name="Dalin E."/>
            <person name="Tice H."/>
            <person name="Pitluck S."/>
            <person name="Bruce D."/>
            <person name="Goodwin L."/>
            <person name="Saunders E."/>
            <person name="Brettin T."/>
            <person name="Detter J.C."/>
            <person name="Han C."/>
            <person name="Schmutz J."/>
            <person name="Larimer F."/>
            <person name="Land M."/>
            <person name="Hauser L."/>
            <person name="Kyrpides N."/>
            <person name="Lykidis A."/>
            <person name="Hemme C."/>
            <person name="Fields M.W."/>
            <person name="He Z."/>
            <person name="Zhou J."/>
            <person name="Richardson P."/>
        </authorList>
    </citation>
    <scope>NUCLEOTIDE SEQUENCE [LARGE SCALE GENOMIC DNA]</scope>
    <source>
        <strain>ATCC 33223 / DSM 2355 / 39E</strain>
    </source>
</reference>